<evidence type="ECO:0000250" key="1">
    <source>
        <dbReference type="UniProtKB" id="Q06053"/>
    </source>
</evidence>
<evidence type="ECO:0000250" key="2">
    <source>
        <dbReference type="UniProtKB" id="Q5SMC7"/>
    </source>
</evidence>
<evidence type="ECO:0000250" key="3">
    <source>
        <dbReference type="UniProtKB" id="Q9UTH9"/>
    </source>
</evidence>
<evidence type="ECO:0000255" key="4">
    <source>
        <dbReference type="PROSITE-ProRule" id="PRU00723"/>
    </source>
</evidence>
<evidence type="ECO:0000256" key="5">
    <source>
        <dbReference type="SAM" id="MobiDB-lite"/>
    </source>
</evidence>
<evidence type="ECO:0000305" key="6"/>
<sequence length="730" mass="81806">MAPETAQSQTPETPMRDLQNDAPVTDTLEAGNTDERPSKKAKLDDASTPDNNANNIAPQRMRGVAPVKPEFIIPRATGTEPQPNTDDAAEAARHEGAQGQEAGKKKKKKPTGQNTNRTFGSSQDEKGLCPSRIFTPEFSPGACQWGEKCRFEHDLRTYLKEYKRGDLTTFDGVCPVWDAKGKCLSGWKCRLVGSHMTERETADGRKELVLVEDEERKKKAQPLVPFAVEDGTANIAPIEAKIALNRKKVKTPRADAYGSWLDKTSRELEKVIHNREVHEERGAESKTDQAEREKEDNRAQYLEPPFLPSEKRRIYFGPETPVLAPLTTQGNLPFRRLCIELGAQFTYSEMALSMPLIQGQRGEWALMRAHETEMLPPTISPGADVVQGYDHSKDFRFGAQIAANKHWQALKATEVLSAYTPNLRVIDLNCGCPIDLLFREGAGSALLEHPSKLERILRGMNAVSQEIPITAKIRMGTRDNSPNALKLAERLILGGYESSTLGLGAPGVAALTLHGRSRQQRYTRQADWGYISECAALIKRLNEKTDQVTDTVREPDPRTQPNGGKTWFLGNGDCYSHLDYDDHVNNAGVDTVMVGRGALIKPWLFEEIQAGQYLDKSASERLSLVEKFAKYGLETWGSDEHGVGTTRRFLLEWLSFACRYIPIGLLEYLPPRIQDRPPSWRGRNELETLMGSHNYKDWIKITEMFLGPAHKDFRFEPKHKSNAWEAEAEG</sequence>
<accession>Q2UL89</accession>
<name>DUS3_ASPOR</name>
<organism>
    <name type="scientific">Aspergillus oryzae (strain ATCC 42149 / RIB 40)</name>
    <name type="common">Yellow koji mold</name>
    <dbReference type="NCBI Taxonomy" id="510516"/>
    <lineage>
        <taxon>Eukaryota</taxon>
        <taxon>Fungi</taxon>
        <taxon>Dikarya</taxon>
        <taxon>Ascomycota</taxon>
        <taxon>Pezizomycotina</taxon>
        <taxon>Eurotiomycetes</taxon>
        <taxon>Eurotiomycetidae</taxon>
        <taxon>Eurotiales</taxon>
        <taxon>Aspergillaceae</taxon>
        <taxon>Aspergillus</taxon>
        <taxon>Aspergillus subgen. Circumdati</taxon>
    </lineage>
</organism>
<reference key="1">
    <citation type="journal article" date="2005" name="Nature">
        <title>Genome sequencing and analysis of Aspergillus oryzae.</title>
        <authorList>
            <person name="Machida M."/>
            <person name="Asai K."/>
            <person name="Sano M."/>
            <person name="Tanaka T."/>
            <person name="Kumagai T."/>
            <person name="Terai G."/>
            <person name="Kusumoto K."/>
            <person name="Arima T."/>
            <person name="Akita O."/>
            <person name="Kashiwagi Y."/>
            <person name="Abe K."/>
            <person name="Gomi K."/>
            <person name="Horiuchi H."/>
            <person name="Kitamoto K."/>
            <person name="Kobayashi T."/>
            <person name="Takeuchi M."/>
            <person name="Denning D.W."/>
            <person name="Galagan J.E."/>
            <person name="Nierman W.C."/>
            <person name="Yu J."/>
            <person name="Archer D.B."/>
            <person name="Bennett J.W."/>
            <person name="Bhatnagar D."/>
            <person name="Cleveland T.E."/>
            <person name="Fedorova N.D."/>
            <person name="Gotoh O."/>
            <person name="Horikawa H."/>
            <person name="Hosoyama A."/>
            <person name="Ichinomiya M."/>
            <person name="Igarashi R."/>
            <person name="Iwashita K."/>
            <person name="Juvvadi P.R."/>
            <person name="Kato M."/>
            <person name="Kato Y."/>
            <person name="Kin T."/>
            <person name="Kokubun A."/>
            <person name="Maeda H."/>
            <person name="Maeyama N."/>
            <person name="Maruyama J."/>
            <person name="Nagasaki H."/>
            <person name="Nakajima T."/>
            <person name="Oda K."/>
            <person name="Okada K."/>
            <person name="Paulsen I."/>
            <person name="Sakamoto K."/>
            <person name="Sawano T."/>
            <person name="Takahashi M."/>
            <person name="Takase K."/>
            <person name="Terabayashi Y."/>
            <person name="Wortman J.R."/>
            <person name="Yamada O."/>
            <person name="Yamagata Y."/>
            <person name="Anazawa H."/>
            <person name="Hata Y."/>
            <person name="Koide Y."/>
            <person name="Komori T."/>
            <person name="Koyama Y."/>
            <person name="Minetoki T."/>
            <person name="Suharnan S."/>
            <person name="Tanaka A."/>
            <person name="Isono K."/>
            <person name="Kuhara S."/>
            <person name="Ogasawara N."/>
            <person name="Kikuchi H."/>
        </authorList>
    </citation>
    <scope>NUCLEOTIDE SEQUENCE [LARGE SCALE GENOMIC DNA]</scope>
    <source>
        <strain>ATCC 42149 / RIB 40</strain>
    </source>
</reference>
<comment type="function">
    <text evidence="1 3">Catalyzes the synthesis of dihydrouridine, a modified base found in the D-loop of most tRNAs. Specifically modifies U47 in cytoplasmic tRNAs (By similarity). Catalyzes the synthesis of dihydrouridine in some mRNAs, thereby affecting their translation (By similarity).</text>
</comment>
<comment type="catalytic activity">
    <reaction evidence="1">
        <text>5,6-dihydrouridine(47) in tRNA + NAD(+) = uridine(47) in tRNA + NADH + H(+)</text>
        <dbReference type="Rhea" id="RHEA:53364"/>
        <dbReference type="Rhea" id="RHEA-COMP:13539"/>
        <dbReference type="Rhea" id="RHEA-COMP:13540"/>
        <dbReference type="ChEBI" id="CHEBI:15378"/>
        <dbReference type="ChEBI" id="CHEBI:57540"/>
        <dbReference type="ChEBI" id="CHEBI:57945"/>
        <dbReference type="ChEBI" id="CHEBI:65315"/>
        <dbReference type="ChEBI" id="CHEBI:74443"/>
        <dbReference type="EC" id="1.3.1.89"/>
    </reaction>
    <physiologicalReaction direction="right-to-left" evidence="1">
        <dbReference type="Rhea" id="RHEA:53366"/>
    </physiologicalReaction>
</comment>
<comment type="catalytic activity">
    <reaction evidence="1">
        <text>5,6-dihydrouridine(47) in tRNA + NADP(+) = uridine(47) in tRNA + NADPH + H(+)</text>
        <dbReference type="Rhea" id="RHEA:53360"/>
        <dbReference type="Rhea" id="RHEA-COMP:13539"/>
        <dbReference type="Rhea" id="RHEA-COMP:13540"/>
        <dbReference type="ChEBI" id="CHEBI:15378"/>
        <dbReference type="ChEBI" id="CHEBI:57783"/>
        <dbReference type="ChEBI" id="CHEBI:58349"/>
        <dbReference type="ChEBI" id="CHEBI:65315"/>
        <dbReference type="ChEBI" id="CHEBI:74443"/>
        <dbReference type="EC" id="1.3.1.89"/>
    </reaction>
    <physiologicalReaction direction="right-to-left" evidence="1">
        <dbReference type="Rhea" id="RHEA:53362"/>
    </physiologicalReaction>
</comment>
<comment type="catalytic activity">
    <reaction evidence="3">
        <text>a 5,6-dihydrouridine in mRNA + NAD(+) = a uridine in mRNA + NADH + H(+)</text>
        <dbReference type="Rhea" id="RHEA:69851"/>
        <dbReference type="Rhea" id="RHEA-COMP:14658"/>
        <dbReference type="Rhea" id="RHEA-COMP:17789"/>
        <dbReference type="ChEBI" id="CHEBI:15378"/>
        <dbReference type="ChEBI" id="CHEBI:57540"/>
        <dbReference type="ChEBI" id="CHEBI:57945"/>
        <dbReference type="ChEBI" id="CHEBI:65315"/>
        <dbReference type="ChEBI" id="CHEBI:74443"/>
    </reaction>
    <physiologicalReaction direction="right-to-left" evidence="3">
        <dbReference type="Rhea" id="RHEA:69853"/>
    </physiologicalReaction>
</comment>
<comment type="catalytic activity">
    <reaction evidence="3">
        <text>a 5,6-dihydrouridine in mRNA + NADP(+) = a uridine in mRNA + NADPH + H(+)</text>
        <dbReference type="Rhea" id="RHEA:69855"/>
        <dbReference type="Rhea" id="RHEA-COMP:14658"/>
        <dbReference type="Rhea" id="RHEA-COMP:17789"/>
        <dbReference type="ChEBI" id="CHEBI:15378"/>
        <dbReference type="ChEBI" id="CHEBI:57783"/>
        <dbReference type="ChEBI" id="CHEBI:58349"/>
        <dbReference type="ChEBI" id="CHEBI:65315"/>
        <dbReference type="ChEBI" id="CHEBI:74443"/>
    </reaction>
    <physiologicalReaction direction="right-to-left" evidence="3">
        <dbReference type="Rhea" id="RHEA:69857"/>
    </physiologicalReaction>
</comment>
<comment type="cofactor">
    <cofactor evidence="2">
        <name>FMN</name>
        <dbReference type="ChEBI" id="CHEBI:58210"/>
    </cofactor>
</comment>
<comment type="subcellular location">
    <subcellularLocation>
        <location evidence="1">Cytoplasm</location>
    </subcellularLocation>
    <subcellularLocation>
        <location evidence="1">Nucleus</location>
    </subcellularLocation>
</comment>
<comment type="similarity">
    <text evidence="6">Belongs to the Dus family. Dus3 subfamily.</text>
</comment>
<protein>
    <recommendedName>
        <fullName>tRNA-dihydrouridine(47) synthase [NAD(P)(+)]</fullName>
        <ecNumber evidence="1">1.3.1.89</ecNumber>
    </recommendedName>
    <alternativeName>
        <fullName>mRNA-dihydrouridine synthase dus3</fullName>
        <ecNumber evidence="3">1.3.1.-</ecNumber>
    </alternativeName>
    <alternativeName>
        <fullName>tRNA-dihydrouridine synthase 3</fullName>
    </alternativeName>
</protein>
<feature type="chain" id="PRO_0000330229" description="tRNA-dihydrouridine(47) synthase [NAD(P)(+)]">
    <location>
        <begin position="1"/>
        <end position="730"/>
    </location>
</feature>
<feature type="zinc finger region" description="C3H1-type 1" evidence="4">
    <location>
        <begin position="123"/>
        <end position="156"/>
    </location>
</feature>
<feature type="zinc finger region" description="C3H1-type 2" evidence="4">
    <location>
        <begin position="174"/>
        <end position="195"/>
    </location>
</feature>
<feature type="region of interest" description="Disordered" evidence="5">
    <location>
        <begin position="1"/>
        <end position="126"/>
    </location>
</feature>
<feature type="region of interest" description="Disordered" evidence="5">
    <location>
        <begin position="274"/>
        <end position="299"/>
    </location>
</feature>
<feature type="compositionally biased region" description="Polar residues" evidence="5">
    <location>
        <begin position="1"/>
        <end position="12"/>
    </location>
</feature>
<feature type="compositionally biased region" description="Basic and acidic residues" evidence="5">
    <location>
        <begin position="33"/>
        <end position="45"/>
    </location>
</feature>
<feature type="compositionally biased region" description="Polar residues" evidence="5">
    <location>
        <begin position="48"/>
        <end position="57"/>
    </location>
</feature>
<feature type="compositionally biased region" description="Polar residues" evidence="5">
    <location>
        <begin position="111"/>
        <end position="122"/>
    </location>
</feature>
<feature type="compositionally biased region" description="Basic and acidic residues" evidence="5">
    <location>
        <begin position="274"/>
        <end position="298"/>
    </location>
</feature>
<feature type="active site" description="Proton donor" evidence="2">
    <location>
        <position position="432"/>
    </location>
</feature>
<feature type="binding site" evidence="2">
    <location>
        <begin position="325"/>
        <end position="327"/>
    </location>
    <ligand>
        <name>FMN</name>
        <dbReference type="ChEBI" id="CHEBI:58210"/>
    </ligand>
</feature>
<feature type="binding site" evidence="2">
    <location>
        <position position="400"/>
    </location>
    <ligand>
        <name>FMN</name>
        <dbReference type="ChEBI" id="CHEBI:58210"/>
    </ligand>
</feature>
<feature type="binding site" evidence="2">
    <location>
        <position position="472"/>
    </location>
    <ligand>
        <name>FMN</name>
        <dbReference type="ChEBI" id="CHEBI:58210"/>
    </ligand>
</feature>
<feature type="binding site" evidence="2">
    <location>
        <position position="514"/>
    </location>
    <ligand>
        <name>FMN</name>
        <dbReference type="ChEBI" id="CHEBI:58210"/>
    </ligand>
</feature>
<feature type="binding site" evidence="2">
    <location>
        <begin position="571"/>
        <end position="573"/>
    </location>
    <ligand>
        <name>FMN</name>
        <dbReference type="ChEBI" id="CHEBI:58210"/>
    </ligand>
</feature>
<feature type="binding site" evidence="2">
    <location>
        <begin position="595"/>
        <end position="596"/>
    </location>
    <ligand>
        <name>FMN</name>
        <dbReference type="ChEBI" id="CHEBI:58210"/>
    </ligand>
</feature>
<gene>
    <name type="primary">dus3</name>
    <name type="ORF">AO090003000505</name>
</gene>
<keyword id="KW-0963">Cytoplasm</keyword>
<keyword id="KW-0285">Flavoprotein</keyword>
<keyword id="KW-0288">FMN</keyword>
<keyword id="KW-0479">Metal-binding</keyword>
<keyword id="KW-0507">mRNA processing</keyword>
<keyword id="KW-0520">NAD</keyword>
<keyword id="KW-0521">NADP</keyword>
<keyword id="KW-0539">Nucleus</keyword>
<keyword id="KW-0560">Oxidoreductase</keyword>
<keyword id="KW-1185">Reference proteome</keyword>
<keyword id="KW-0677">Repeat</keyword>
<keyword id="KW-0819">tRNA processing</keyword>
<keyword id="KW-0862">Zinc</keyword>
<keyword id="KW-0863">Zinc-finger</keyword>
<proteinExistence type="inferred from homology"/>
<dbReference type="EC" id="1.3.1.89" evidence="1"/>
<dbReference type="EC" id="1.3.1.-" evidence="3"/>
<dbReference type="EMBL" id="BA000050">
    <property type="protein sequence ID" value="BAE57676.1"/>
    <property type="molecule type" value="Genomic_DNA"/>
</dbReference>
<dbReference type="RefSeq" id="XP_001819678.1">
    <property type="nucleotide sequence ID" value="XM_001819626.1"/>
</dbReference>
<dbReference type="SMR" id="Q2UL89"/>
<dbReference type="STRING" id="510516.Q2UL89"/>
<dbReference type="EnsemblFungi" id="BAE57676">
    <property type="protein sequence ID" value="BAE57676"/>
    <property type="gene ID" value="AO090003000505"/>
</dbReference>
<dbReference type="GeneID" id="5991661"/>
<dbReference type="KEGG" id="aor:AO090003000505"/>
<dbReference type="VEuPathDB" id="FungiDB:AO090003000505"/>
<dbReference type="HOGENOM" id="CLU_013299_7_0_1"/>
<dbReference type="OMA" id="WSYIAEC"/>
<dbReference type="OrthoDB" id="49833at5052"/>
<dbReference type="Proteomes" id="UP000006564">
    <property type="component" value="Chromosome 2"/>
</dbReference>
<dbReference type="GO" id="GO:0005737">
    <property type="term" value="C:cytoplasm"/>
    <property type="evidence" value="ECO:0007669"/>
    <property type="project" value="UniProtKB-SubCell"/>
</dbReference>
<dbReference type="GO" id="GO:0034399">
    <property type="term" value="C:nuclear periphery"/>
    <property type="evidence" value="ECO:0007669"/>
    <property type="project" value="EnsemblFungi"/>
</dbReference>
<dbReference type="GO" id="GO:0050660">
    <property type="term" value="F:flavin adenine dinucleotide binding"/>
    <property type="evidence" value="ECO:0007669"/>
    <property type="project" value="InterPro"/>
</dbReference>
<dbReference type="GO" id="GO:0106414">
    <property type="term" value="F:mRNA dihydrouridine synthase activity"/>
    <property type="evidence" value="ECO:0007669"/>
    <property type="project" value="RHEA"/>
</dbReference>
<dbReference type="GO" id="GO:0003723">
    <property type="term" value="F:RNA binding"/>
    <property type="evidence" value="ECO:0007669"/>
    <property type="project" value="TreeGrafter"/>
</dbReference>
<dbReference type="GO" id="GO:0102265">
    <property type="term" value="F:tRNA-dihydrouridine47 synthase activity"/>
    <property type="evidence" value="ECO:0007669"/>
    <property type="project" value="UniProtKB-EC"/>
</dbReference>
<dbReference type="GO" id="GO:0008270">
    <property type="term" value="F:zinc ion binding"/>
    <property type="evidence" value="ECO:0007669"/>
    <property type="project" value="UniProtKB-KW"/>
</dbReference>
<dbReference type="GO" id="GO:0006397">
    <property type="term" value="P:mRNA processing"/>
    <property type="evidence" value="ECO:0007669"/>
    <property type="project" value="UniProtKB-KW"/>
</dbReference>
<dbReference type="CDD" id="cd02801">
    <property type="entry name" value="DUS_like_FMN"/>
    <property type="match status" value="1"/>
</dbReference>
<dbReference type="FunFam" id="3.20.20.70:FF:000145">
    <property type="entry name" value="tRNA-dihydrouridine(47) synthase [NAD(P)(+)]"/>
    <property type="match status" value="1"/>
</dbReference>
<dbReference type="Gene3D" id="3.20.20.70">
    <property type="entry name" value="Aldolase class I"/>
    <property type="match status" value="1"/>
</dbReference>
<dbReference type="InterPro" id="IPR013785">
    <property type="entry name" value="Aldolase_TIM"/>
</dbReference>
<dbReference type="InterPro" id="IPR035587">
    <property type="entry name" value="DUS-like_FMN-bd"/>
</dbReference>
<dbReference type="InterPro" id="IPR018517">
    <property type="entry name" value="tRNA_hU_synthase_CS"/>
</dbReference>
<dbReference type="InterPro" id="IPR000571">
    <property type="entry name" value="Znf_CCCH"/>
</dbReference>
<dbReference type="PANTHER" id="PTHR45846">
    <property type="entry name" value="TRNA-DIHYDROURIDINE(47) SYNTHASE [NAD(P)(+)]-LIKE"/>
    <property type="match status" value="1"/>
</dbReference>
<dbReference type="PANTHER" id="PTHR45846:SF1">
    <property type="entry name" value="TRNA-DIHYDROURIDINE(47) SYNTHASE [NAD(P)(+)]-LIKE"/>
    <property type="match status" value="1"/>
</dbReference>
<dbReference type="Pfam" id="PF01207">
    <property type="entry name" value="Dus"/>
    <property type="match status" value="2"/>
</dbReference>
<dbReference type="SUPFAM" id="SSF51395">
    <property type="entry name" value="FMN-linked oxidoreductases"/>
    <property type="match status" value="1"/>
</dbReference>
<dbReference type="PROSITE" id="PS01136">
    <property type="entry name" value="UPF0034"/>
    <property type="match status" value="1"/>
</dbReference>
<dbReference type="PROSITE" id="PS50103">
    <property type="entry name" value="ZF_C3H1"/>
    <property type="match status" value="1"/>
</dbReference>